<evidence type="ECO:0000250" key="1">
    <source>
        <dbReference type="UniProtKB" id="P08621"/>
    </source>
</evidence>
<evidence type="ECO:0000250" key="2">
    <source>
        <dbReference type="UniProtKB" id="Q62376"/>
    </source>
</evidence>
<evidence type="ECO:0000255" key="3">
    <source>
        <dbReference type="PROSITE-ProRule" id="PRU00176"/>
    </source>
</evidence>
<evidence type="ECO:0000256" key="4">
    <source>
        <dbReference type="SAM" id="MobiDB-lite"/>
    </source>
</evidence>
<reference key="1">
    <citation type="submission" date="2006-04" db="EMBL/GenBank/DDBJ databases">
        <authorList>
            <consortium name="NIH - Mammalian Gene Collection (MGC) project"/>
        </authorList>
    </citation>
    <scope>NUCLEOTIDE SEQUENCE [LARGE SCALE MRNA]</scope>
    <source>
        <strain>Hereford</strain>
        <tissue>Uterus</tissue>
    </source>
</reference>
<protein>
    <recommendedName>
        <fullName>U1 small nuclear ribonucleoprotein 70 kDa</fullName>
        <shortName>U1 snRNP 70 kDa</shortName>
        <shortName>U1-70K</shortName>
        <shortName>snRNP70</shortName>
    </recommendedName>
</protein>
<comment type="function">
    <text evidence="1">Component of the spliceosomal U1 snRNP, which is essential for recognition of the pre-mRNA 5' splice-site and the subsequent assembly of the spliceosome. SNRNP70 binds to the loop I region of U1-snRNA.</text>
</comment>
<comment type="subunit">
    <text evidence="1 2">Component of the U1 snRNP. The U1 snRNP is composed of the U1 snRNA and the 7 core Sm proteins SNRPB, SNRPD1, SNRPD2, SNRPD3, SNRPE, SNRPF and SNRPG that assemble in a heptameric protein ring on the Sm site of the small nuclear RNA to form the core snRNP, and at least three U1 snRNP-specific proteins SNRNP70/U1-70K, SNRPA/U1-A and SNRPC/U1-C (By similarity). Interacts with SCNM1 (By similarity). Found in a pre-mRNA splicing complex with SFRS4, SFRS5, SNRNP70, SNRPA1, SRRM1 and SRRM2. Found in a pre-mRNA exonic splicing enhancer (ESE) complex with SNRNP70, SNRPA1, SRRM1 and TRA2B/SFRS10. Interacts with dephosphorylated SFRS13A and SFPQ. Interacts with NUDT21/CPSF5, CPSF6, SCAF11, and ZRANB2. Interacts with GEMIN5 (By similarity). Interacts with FUS (By similarity).</text>
</comment>
<comment type="subcellular location">
    <subcellularLocation>
        <location evidence="2">Nucleus speckle</location>
    </subcellularLocation>
    <subcellularLocation>
        <location evidence="2">Nucleus</location>
        <location evidence="2">Nucleoplasm</location>
    </subcellularLocation>
    <text evidence="2">Colocalizes with SCNM1 and LUC7L2 in nuclear speckles.</text>
</comment>
<comment type="domain">
    <text evidence="1">The RRM domain mediates interaction with U1 RNA.</text>
</comment>
<comment type="PTM">
    <text evidence="1">Extensively phosphorylated on serine residues in the C-terminal region.</text>
</comment>
<accession>Q1RMR2</accession>
<keyword id="KW-0007">Acetylation</keyword>
<keyword id="KW-1017">Isopeptide bond</keyword>
<keyword id="KW-0507">mRNA processing</keyword>
<keyword id="KW-0539">Nucleus</keyword>
<keyword id="KW-0597">Phosphoprotein</keyword>
<keyword id="KW-1185">Reference proteome</keyword>
<keyword id="KW-0687">Ribonucleoprotein</keyword>
<keyword id="KW-0694">RNA-binding</keyword>
<keyword id="KW-0832">Ubl conjugation</keyword>
<sequence length="439" mass="51426">MTQFLPPNLLALFAPRDPIPYLPPLEKLPHEKHHNQPYCGIAPYIREFEDPRDAPPPTRAETREERMERKRREKIERRQQEVETELKMWDPHNDPNAQGDAFKTLFVARVNYDTTESKLRREFEVYGPIKRIHMVYSKRSGKPRGYAFIEYEHERDMHSAYKHADGKKIDGRRVLVDVERGRTVKGWRPRRLGGGLGGTRRGGADVNIRHSGRDDTSRYDERPGPSPLPHRDRDRDRERERRERSRERDKERERRRSRSRDRRRRSRSRDKEERRRSRERSKDKDRDRKRRSSRSRERARRERERKEELRGGGGGGGDMAEPSEAGDAPPDDGPPGELGPDGPDGPEEKGRDRDRDRRRSHRSERERRRDRDRDRDREHKRGERGGDRGRDEARGGGGGGQDNGLEGLGNDGRDMYMESEGGDGYLAPENGYLMEAAPE</sequence>
<proteinExistence type="evidence at transcript level"/>
<organism>
    <name type="scientific">Bos taurus</name>
    <name type="common">Bovine</name>
    <dbReference type="NCBI Taxonomy" id="9913"/>
    <lineage>
        <taxon>Eukaryota</taxon>
        <taxon>Metazoa</taxon>
        <taxon>Chordata</taxon>
        <taxon>Craniata</taxon>
        <taxon>Vertebrata</taxon>
        <taxon>Euteleostomi</taxon>
        <taxon>Mammalia</taxon>
        <taxon>Eutheria</taxon>
        <taxon>Laurasiatheria</taxon>
        <taxon>Artiodactyla</taxon>
        <taxon>Ruminantia</taxon>
        <taxon>Pecora</taxon>
        <taxon>Bovidae</taxon>
        <taxon>Bovinae</taxon>
        <taxon>Bos</taxon>
    </lineage>
</organism>
<dbReference type="EMBL" id="BC114762">
    <property type="protein sequence ID" value="AAI14763.1"/>
    <property type="molecule type" value="mRNA"/>
</dbReference>
<dbReference type="RefSeq" id="NP_001069514.1">
    <property type="nucleotide sequence ID" value="NM_001076046.2"/>
</dbReference>
<dbReference type="RefSeq" id="XP_059732816.1">
    <property type="nucleotide sequence ID" value="XM_059876833.1"/>
</dbReference>
<dbReference type="SMR" id="Q1RMR2"/>
<dbReference type="FunCoup" id="Q1RMR2">
    <property type="interactions" value="2430"/>
</dbReference>
<dbReference type="STRING" id="9913.ENSBTAP00000059066"/>
<dbReference type="PaxDb" id="9913-ENSBTAP00000002587"/>
<dbReference type="Ensembl" id="ENSBTAT00000002587.7">
    <property type="protein sequence ID" value="ENSBTAP00000002587.7"/>
    <property type="gene ID" value="ENSBTAG00000048800.2"/>
</dbReference>
<dbReference type="GeneID" id="535113"/>
<dbReference type="KEGG" id="bta:535113"/>
<dbReference type="CTD" id="6625"/>
<dbReference type="eggNOG" id="KOG0113">
    <property type="taxonomic scope" value="Eukaryota"/>
</dbReference>
<dbReference type="GeneTree" id="ENSGT00940000160292"/>
<dbReference type="HOGENOM" id="CLU_045151_1_0_1"/>
<dbReference type="InParanoid" id="Q1RMR2"/>
<dbReference type="OrthoDB" id="4207594at2759"/>
<dbReference type="TreeFam" id="TF314215"/>
<dbReference type="Proteomes" id="UP000009136">
    <property type="component" value="Chromosome 18"/>
</dbReference>
<dbReference type="GO" id="GO:0016607">
    <property type="term" value="C:nuclear speck"/>
    <property type="evidence" value="ECO:0000250"/>
    <property type="project" value="UniProtKB"/>
</dbReference>
<dbReference type="GO" id="GO:0005634">
    <property type="term" value="C:nucleus"/>
    <property type="evidence" value="ECO:0000250"/>
    <property type="project" value="UniProtKB"/>
</dbReference>
<dbReference type="GO" id="GO:0005681">
    <property type="term" value="C:spliceosomal complex"/>
    <property type="evidence" value="ECO:0000250"/>
    <property type="project" value="UniProtKB"/>
</dbReference>
<dbReference type="GO" id="GO:0005685">
    <property type="term" value="C:U1 snRNP"/>
    <property type="evidence" value="ECO:0000250"/>
    <property type="project" value="UniProtKB"/>
</dbReference>
<dbReference type="GO" id="GO:0071004">
    <property type="term" value="C:U2-type prespliceosome"/>
    <property type="evidence" value="ECO:0000318"/>
    <property type="project" value="GO_Central"/>
</dbReference>
<dbReference type="GO" id="GO:0003729">
    <property type="term" value="F:mRNA binding"/>
    <property type="evidence" value="ECO:0000318"/>
    <property type="project" value="GO_Central"/>
</dbReference>
<dbReference type="GO" id="GO:0003723">
    <property type="term" value="F:RNA binding"/>
    <property type="evidence" value="ECO:0000250"/>
    <property type="project" value="UniProtKB"/>
</dbReference>
<dbReference type="GO" id="GO:0030619">
    <property type="term" value="F:U1 snRNA binding"/>
    <property type="evidence" value="ECO:0000250"/>
    <property type="project" value="UniProtKB"/>
</dbReference>
<dbReference type="GO" id="GO:0000398">
    <property type="term" value="P:mRNA splicing, via spliceosome"/>
    <property type="evidence" value="ECO:0000250"/>
    <property type="project" value="UniProtKB"/>
</dbReference>
<dbReference type="GO" id="GO:0048026">
    <property type="term" value="P:positive regulation of mRNA splicing, via spliceosome"/>
    <property type="evidence" value="ECO:0007669"/>
    <property type="project" value="Ensembl"/>
</dbReference>
<dbReference type="GO" id="GO:0043484">
    <property type="term" value="P:regulation of RNA splicing"/>
    <property type="evidence" value="ECO:0000250"/>
    <property type="project" value="UniProtKB"/>
</dbReference>
<dbReference type="CDD" id="cd12236">
    <property type="entry name" value="RRM_snRNP70"/>
    <property type="match status" value="1"/>
</dbReference>
<dbReference type="FunFam" id="3.30.70.330:FF:001585">
    <property type="entry name" value="U1 small nuclear ribonucleoprotein 70 kDa"/>
    <property type="match status" value="1"/>
</dbReference>
<dbReference type="Gene3D" id="3.30.70.330">
    <property type="match status" value="1"/>
</dbReference>
<dbReference type="InterPro" id="IPR012677">
    <property type="entry name" value="Nucleotide-bd_a/b_plait_sf"/>
</dbReference>
<dbReference type="InterPro" id="IPR035979">
    <property type="entry name" value="RBD_domain_sf"/>
</dbReference>
<dbReference type="InterPro" id="IPR000504">
    <property type="entry name" value="RRM_dom"/>
</dbReference>
<dbReference type="InterPro" id="IPR034143">
    <property type="entry name" value="snRNP70_RRM"/>
</dbReference>
<dbReference type="InterPro" id="IPR051183">
    <property type="entry name" value="U1_U11-U12_snRNP_70-35kDa"/>
</dbReference>
<dbReference type="InterPro" id="IPR022023">
    <property type="entry name" value="U1snRNP70_N"/>
</dbReference>
<dbReference type="PANTHER" id="PTHR13952">
    <property type="entry name" value="U1 SMALL NUCLEAR RIBONUCLEOPROTEIN 70 KD"/>
    <property type="match status" value="1"/>
</dbReference>
<dbReference type="PANTHER" id="PTHR13952:SF5">
    <property type="entry name" value="U1 SMALL NUCLEAR RIBONUCLEOPROTEIN 70 KDA"/>
    <property type="match status" value="1"/>
</dbReference>
<dbReference type="Pfam" id="PF00076">
    <property type="entry name" value="RRM_1"/>
    <property type="match status" value="1"/>
</dbReference>
<dbReference type="Pfam" id="PF12220">
    <property type="entry name" value="U1snRNP70_N"/>
    <property type="match status" value="1"/>
</dbReference>
<dbReference type="SMART" id="SM00360">
    <property type="entry name" value="RRM"/>
    <property type="match status" value="1"/>
</dbReference>
<dbReference type="SUPFAM" id="SSF54928">
    <property type="entry name" value="RNA-binding domain, RBD"/>
    <property type="match status" value="1"/>
</dbReference>
<dbReference type="PROSITE" id="PS50102">
    <property type="entry name" value="RRM"/>
    <property type="match status" value="1"/>
</dbReference>
<name>RU17_BOVIN</name>
<gene>
    <name type="primary">SNRNP70</name>
    <name type="synonym">SNRP70</name>
</gene>
<feature type="initiator methionine" description="Removed" evidence="1">
    <location>
        <position position="1"/>
    </location>
</feature>
<feature type="chain" id="PRO_0000259962" description="U1 small nuclear ribonucleoprotein 70 kDa">
    <location>
        <begin position="2"/>
        <end position="439"/>
    </location>
</feature>
<feature type="domain" description="RRM" evidence="3">
    <location>
        <begin position="103"/>
        <end position="181"/>
    </location>
</feature>
<feature type="region of interest" description="Disordered" evidence="4">
    <location>
        <begin position="48"/>
        <end position="79"/>
    </location>
</feature>
<feature type="region of interest" description="Required for interaction with U1 RNA" evidence="1">
    <location>
        <begin position="92"/>
        <end position="202"/>
    </location>
</feature>
<feature type="region of interest" description="Disordered" evidence="4">
    <location>
        <begin position="187"/>
        <end position="439"/>
    </location>
</feature>
<feature type="compositionally biased region" description="Basic and acidic residues" evidence="4">
    <location>
        <begin position="60"/>
        <end position="79"/>
    </location>
</feature>
<feature type="compositionally biased region" description="Gly residues" evidence="4">
    <location>
        <begin position="192"/>
        <end position="201"/>
    </location>
</feature>
<feature type="compositionally biased region" description="Basic and acidic residues" evidence="4">
    <location>
        <begin position="207"/>
        <end position="254"/>
    </location>
</feature>
<feature type="compositionally biased region" description="Basic residues" evidence="4">
    <location>
        <begin position="255"/>
        <end position="268"/>
    </location>
</feature>
<feature type="compositionally biased region" description="Basic and acidic residues" evidence="4">
    <location>
        <begin position="269"/>
        <end position="286"/>
    </location>
</feature>
<feature type="compositionally biased region" description="Basic and acidic residues" evidence="4">
    <location>
        <begin position="294"/>
        <end position="310"/>
    </location>
</feature>
<feature type="compositionally biased region" description="Basic and acidic residues" evidence="4">
    <location>
        <begin position="346"/>
        <end position="394"/>
    </location>
</feature>
<feature type="compositionally biased region" description="Gly residues" evidence="4">
    <location>
        <begin position="395"/>
        <end position="410"/>
    </location>
</feature>
<feature type="modified residue" description="N-acetylthreonine" evidence="1">
    <location>
        <position position="2"/>
    </location>
</feature>
<feature type="modified residue" description="N6-acetyllysine" evidence="1">
    <location>
        <position position="118"/>
    </location>
</feature>
<feature type="modified residue" description="Phosphotyrosine" evidence="1">
    <location>
        <position position="126"/>
    </location>
</feature>
<feature type="modified residue" description="Phosphoserine" evidence="1">
    <location>
        <position position="226"/>
    </location>
</feature>
<feature type="modified residue" description="Phosphoserine" evidence="1">
    <location>
        <position position="268"/>
    </location>
</feature>
<feature type="modified residue" description="Phosphoserine" evidence="1">
    <location>
        <position position="323"/>
    </location>
</feature>
<feature type="cross-link" description="Glycyl lysine isopeptide (Lys-Gly) (interchain with G-Cter in SUMO2)" evidence="1">
    <location>
        <position position="349"/>
    </location>
</feature>